<evidence type="ECO:0000250" key="1">
    <source>
        <dbReference type="UniProtKB" id="O48814"/>
    </source>
</evidence>
<evidence type="ECO:0000250" key="2">
    <source>
        <dbReference type="UniProtKB" id="Q9FE20"/>
    </source>
</evidence>
<evidence type="ECO:0000255" key="3">
    <source>
        <dbReference type="PROSITE-ProRule" id="PRU00159"/>
    </source>
</evidence>
<evidence type="ECO:0000256" key="4">
    <source>
        <dbReference type="SAM" id="MobiDB-lite"/>
    </source>
</evidence>
<evidence type="ECO:0000269" key="5">
    <source>
    </source>
</evidence>
<evidence type="ECO:0000269" key="6">
    <source>
    </source>
</evidence>
<evidence type="ECO:0000269" key="7">
    <source>
    </source>
</evidence>
<evidence type="ECO:0000303" key="8">
    <source>
    </source>
</evidence>
<evidence type="ECO:0000303" key="9">
    <source>
    </source>
</evidence>
<evidence type="ECO:0000303" key="10">
    <source>
    </source>
</evidence>
<evidence type="ECO:0000305" key="11"/>
<reference key="1">
    <citation type="journal article" date="1992" name="Plant Mol. Biol.">
        <title>Novel protein kinase of Arabidopsis thaliana (APK1) that phosphorylates tyrosine, serine and threonine.</title>
        <authorList>
            <person name="Hirayama T."/>
            <person name="Oka A."/>
        </authorList>
    </citation>
    <scope>NUCLEOTIDE SEQUENCE [MRNA]</scope>
    <scope>FUNCTION</scope>
    <source>
        <strain>cv. Columbia</strain>
    </source>
</reference>
<reference key="2">
    <citation type="journal article" date="2000" name="Nature">
        <title>Sequence and analysis of chromosome 1 of the plant Arabidopsis thaliana.</title>
        <authorList>
            <person name="Theologis A."/>
            <person name="Ecker J.R."/>
            <person name="Palm C.J."/>
            <person name="Federspiel N.A."/>
            <person name="Kaul S."/>
            <person name="White O."/>
            <person name="Alonso J."/>
            <person name="Altafi H."/>
            <person name="Araujo R."/>
            <person name="Bowman C.L."/>
            <person name="Brooks S.Y."/>
            <person name="Buehler E."/>
            <person name="Chan A."/>
            <person name="Chao Q."/>
            <person name="Chen H."/>
            <person name="Cheuk R.F."/>
            <person name="Chin C.W."/>
            <person name="Chung M.K."/>
            <person name="Conn L."/>
            <person name="Conway A.B."/>
            <person name="Conway A.R."/>
            <person name="Creasy T.H."/>
            <person name="Dewar K."/>
            <person name="Dunn P."/>
            <person name="Etgu P."/>
            <person name="Feldblyum T.V."/>
            <person name="Feng J.-D."/>
            <person name="Fong B."/>
            <person name="Fujii C.Y."/>
            <person name="Gill J.E."/>
            <person name="Goldsmith A.D."/>
            <person name="Haas B."/>
            <person name="Hansen N.F."/>
            <person name="Hughes B."/>
            <person name="Huizar L."/>
            <person name="Hunter J.L."/>
            <person name="Jenkins J."/>
            <person name="Johnson-Hopson C."/>
            <person name="Khan S."/>
            <person name="Khaykin E."/>
            <person name="Kim C.J."/>
            <person name="Koo H.L."/>
            <person name="Kremenetskaia I."/>
            <person name="Kurtz D.B."/>
            <person name="Kwan A."/>
            <person name="Lam B."/>
            <person name="Langin-Hooper S."/>
            <person name="Lee A."/>
            <person name="Lee J.M."/>
            <person name="Lenz C.A."/>
            <person name="Li J.H."/>
            <person name="Li Y.-P."/>
            <person name="Lin X."/>
            <person name="Liu S.X."/>
            <person name="Liu Z.A."/>
            <person name="Luros J.S."/>
            <person name="Maiti R."/>
            <person name="Marziali A."/>
            <person name="Militscher J."/>
            <person name="Miranda M."/>
            <person name="Nguyen M."/>
            <person name="Nierman W.C."/>
            <person name="Osborne B.I."/>
            <person name="Pai G."/>
            <person name="Peterson J."/>
            <person name="Pham P.K."/>
            <person name="Rizzo M."/>
            <person name="Rooney T."/>
            <person name="Rowley D."/>
            <person name="Sakano H."/>
            <person name="Salzberg S.L."/>
            <person name="Schwartz J.R."/>
            <person name="Shinn P."/>
            <person name="Southwick A.M."/>
            <person name="Sun H."/>
            <person name="Tallon L.J."/>
            <person name="Tambunga G."/>
            <person name="Toriumi M.J."/>
            <person name="Town C.D."/>
            <person name="Utterback T."/>
            <person name="Van Aken S."/>
            <person name="Vaysberg M."/>
            <person name="Vysotskaia V.S."/>
            <person name="Walker M."/>
            <person name="Wu D."/>
            <person name="Yu G."/>
            <person name="Fraser C.M."/>
            <person name="Venter J.C."/>
            <person name="Davis R.W."/>
        </authorList>
    </citation>
    <scope>NUCLEOTIDE SEQUENCE [LARGE SCALE GENOMIC DNA]</scope>
    <source>
        <strain>cv. Columbia</strain>
    </source>
</reference>
<reference key="3">
    <citation type="journal article" date="2017" name="Plant J.">
        <title>Araport11: a complete reannotation of the Arabidopsis thaliana reference genome.</title>
        <authorList>
            <person name="Cheng C.Y."/>
            <person name="Krishnakumar V."/>
            <person name="Chan A.P."/>
            <person name="Thibaud-Nissen F."/>
            <person name="Schobel S."/>
            <person name="Town C.D."/>
        </authorList>
    </citation>
    <scope>GENOME REANNOTATION</scope>
    <source>
        <strain>cv. Columbia</strain>
    </source>
</reference>
<reference key="4">
    <citation type="journal article" date="2003" name="Science">
        <title>Empirical analysis of transcriptional activity in the Arabidopsis genome.</title>
        <authorList>
            <person name="Yamada K."/>
            <person name="Lim J."/>
            <person name="Dale J.M."/>
            <person name="Chen H."/>
            <person name="Shinn P."/>
            <person name="Palm C.J."/>
            <person name="Southwick A.M."/>
            <person name="Wu H.C."/>
            <person name="Kim C.J."/>
            <person name="Nguyen M."/>
            <person name="Pham P.K."/>
            <person name="Cheuk R.F."/>
            <person name="Karlin-Newmann G."/>
            <person name="Liu S.X."/>
            <person name="Lam B."/>
            <person name="Sakano H."/>
            <person name="Wu T."/>
            <person name="Yu G."/>
            <person name="Miranda M."/>
            <person name="Quach H.L."/>
            <person name="Tripp M."/>
            <person name="Chang C.H."/>
            <person name="Lee J.M."/>
            <person name="Toriumi M.J."/>
            <person name="Chan M.M."/>
            <person name="Tang C.C."/>
            <person name="Onodera C.S."/>
            <person name="Deng J.M."/>
            <person name="Akiyama K."/>
            <person name="Ansari Y."/>
            <person name="Arakawa T."/>
            <person name="Banh J."/>
            <person name="Banno F."/>
            <person name="Bowser L."/>
            <person name="Brooks S.Y."/>
            <person name="Carninci P."/>
            <person name="Chao Q."/>
            <person name="Choy N."/>
            <person name="Enju A."/>
            <person name="Goldsmith A.D."/>
            <person name="Gurjal M."/>
            <person name="Hansen N.F."/>
            <person name="Hayashizaki Y."/>
            <person name="Johnson-Hopson C."/>
            <person name="Hsuan V.W."/>
            <person name="Iida K."/>
            <person name="Karnes M."/>
            <person name="Khan S."/>
            <person name="Koesema E."/>
            <person name="Ishida J."/>
            <person name="Jiang P.X."/>
            <person name="Jones T."/>
            <person name="Kawai J."/>
            <person name="Kamiya A."/>
            <person name="Meyers C."/>
            <person name="Nakajima M."/>
            <person name="Narusaka M."/>
            <person name="Seki M."/>
            <person name="Sakurai T."/>
            <person name="Satou M."/>
            <person name="Tamse R."/>
            <person name="Vaysberg M."/>
            <person name="Wallender E.K."/>
            <person name="Wong C."/>
            <person name="Yamamura Y."/>
            <person name="Yuan S."/>
            <person name="Shinozaki K."/>
            <person name="Davis R.W."/>
            <person name="Theologis A."/>
            <person name="Ecker J.R."/>
        </authorList>
    </citation>
    <scope>NUCLEOTIDE SEQUENCE [LARGE SCALE MRNA]</scope>
    <source>
        <strain>cv. Columbia</strain>
    </source>
</reference>
<reference key="5">
    <citation type="journal article" date="2010" name="Cell Host Microbe">
        <title>Receptor-like cytoplasmic kinases integrate signaling from multiple plant immune receptors and are targeted by a Pseudomonas syringae effector.</title>
        <authorList>
            <person name="Zhang J."/>
            <person name="Li W."/>
            <person name="Xiang T."/>
            <person name="Liu Z."/>
            <person name="Laluk K."/>
            <person name="Ding X."/>
            <person name="Zou Y."/>
            <person name="Gao M."/>
            <person name="Zhang X."/>
            <person name="Chen S."/>
            <person name="Mengiste T."/>
            <person name="Zhang Y."/>
            <person name="Zhou J.M."/>
        </authorList>
    </citation>
    <scope>GENE FAMILY</scope>
    <scope>NOMENCLATURE</scope>
</reference>
<reference key="6">
    <citation type="journal article" date="2013" name="PLoS ONE">
        <title>xopAC-triggered immunity against Xanthomonas depends on Arabidopsis receptor-like cytoplasmic kinase genes PBL2 and RIPK.</title>
        <authorList>
            <person name="Guy E."/>
            <person name="Lautier M."/>
            <person name="Chabannes M."/>
            <person name="Roux B."/>
            <person name="Lauber E."/>
            <person name="Arlat M."/>
            <person name="Noel L.D."/>
        </authorList>
    </citation>
    <scope>INTERACTION WITH XANTHOMONAS CAMPESTRIS XOPAC/AVRAC</scope>
</reference>
<reference key="7">
    <citation type="journal article" date="2014" name="PLoS ONE">
        <title>Light-induced stomatal opening is affected by the guard cell protein kinase APK1b.</title>
        <authorList>
            <person name="Elhaddad N.S."/>
            <person name="Hunt L."/>
            <person name="Sloan J."/>
            <person name="Gray J.E."/>
        </authorList>
    </citation>
    <scope>TISSUE SPECIFICITY</scope>
</reference>
<dbReference type="EC" id="2.7.11.1" evidence="11"/>
<dbReference type="EMBL" id="D12522">
    <property type="protein sequence ID" value="BAA02092.1"/>
    <property type="molecule type" value="mRNA"/>
</dbReference>
<dbReference type="EMBL" id="AC022464">
    <property type="protein sequence ID" value="AAF79545.1"/>
    <property type="status" value="ALT_SEQ"/>
    <property type="molecule type" value="Genomic_DNA"/>
</dbReference>
<dbReference type="EMBL" id="CP002684">
    <property type="protein sequence ID" value="AEE28143.1"/>
    <property type="molecule type" value="Genomic_DNA"/>
</dbReference>
<dbReference type="EMBL" id="CP002684">
    <property type="protein sequence ID" value="AEE28144.1"/>
    <property type="molecule type" value="Genomic_DNA"/>
</dbReference>
<dbReference type="EMBL" id="CP002684">
    <property type="protein sequence ID" value="ANM58151.1"/>
    <property type="molecule type" value="Genomic_DNA"/>
</dbReference>
<dbReference type="EMBL" id="BT004055">
    <property type="protein sequence ID" value="AAO42086.1"/>
    <property type="molecule type" value="mRNA"/>
</dbReference>
<dbReference type="EMBL" id="BT005112">
    <property type="protein sequence ID" value="AAO50645.1"/>
    <property type="molecule type" value="mRNA"/>
</dbReference>
<dbReference type="PIR" id="S28615">
    <property type="entry name" value="S28615"/>
</dbReference>
<dbReference type="RefSeq" id="NP_001320608.1">
    <molecule id="Q06548-1"/>
    <property type="nucleotide sequence ID" value="NM_001331710.1"/>
</dbReference>
<dbReference type="RefSeq" id="NP_172237.1">
    <molecule id="Q06548-1"/>
    <property type="nucleotide sequence ID" value="NM_100631.4"/>
</dbReference>
<dbReference type="RefSeq" id="NP_973778.1">
    <molecule id="Q06548-1"/>
    <property type="nucleotide sequence ID" value="NM_202049.3"/>
</dbReference>
<dbReference type="SMR" id="Q06548"/>
<dbReference type="BioGRID" id="22512">
    <property type="interactions" value="2"/>
</dbReference>
<dbReference type="FunCoup" id="Q06548">
    <property type="interactions" value="2716"/>
</dbReference>
<dbReference type="STRING" id="3702.Q06548"/>
<dbReference type="iPTMnet" id="Q06548"/>
<dbReference type="PaxDb" id="3702-AT1G07570.3"/>
<dbReference type="EnsemblPlants" id="AT1G07570.1">
    <molecule id="Q06548-1"/>
    <property type="protein sequence ID" value="AT1G07570.1"/>
    <property type="gene ID" value="AT1G07570"/>
</dbReference>
<dbReference type="EnsemblPlants" id="AT1G07570.2">
    <molecule id="Q06548-1"/>
    <property type="protein sequence ID" value="AT1G07570.2"/>
    <property type="gene ID" value="AT1G07570"/>
</dbReference>
<dbReference type="EnsemblPlants" id="AT1G07570.5">
    <molecule id="Q06548-1"/>
    <property type="protein sequence ID" value="AT1G07570.5"/>
    <property type="gene ID" value="AT1G07570"/>
</dbReference>
<dbReference type="GeneID" id="837271"/>
<dbReference type="Gramene" id="AT1G07570.1">
    <molecule id="Q06548-1"/>
    <property type="protein sequence ID" value="AT1G07570.1"/>
    <property type="gene ID" value="AT1G07570"/>
</dbReference>
<dbReference type="Gramene" id="AT1G07570.2">
    <molecule id="Q06548-1"/>
    <property type="protein sequence ID" value="AT1G07570.2"/>
    <property type="gene ID" value="AT1G07570"/>
</dbReference>
<dbReference type="Gramene" id="AT1G07570.5">
    <molecule id="Q06548-1"/>
    <property type="protein sequence ID" value="AT1G07570.5"/>
    <property type="gene ID" value="AT1G07570"/>
</dbReference>
<dbReference type="KEGG" id="ath:AT1G07570"/>
<dbReference type="Araport" id="AT1G07570"/>
<dbReference type="TAIR" id="AT1G07570">
    <property type="gene designation" value="APK1A"/>
</dbReference>
<dbReference type="eggNOG" id="KOG1187">
    <property type="taxonomic scope" value="Eukaryota"/>
</dbReference>
<dbReference type="HOGENOM" id="CLU_000288_21_13_1"/>
<dbReference type="InParanoid" id="Q06548"/>
<dbReference type="OMA" id="KNRPTMH"/>
<dbReference type="PhylomeDB" id="Q06548"/>
<dbReference type="BRENDA" id="2.7.10.2">
    <property type="organism ID" value="399"/>
</dbReference>
<dbReference type="PRO" id="PR:Q06548"/>
<dbReference type="Proteomes" id="UP000006548">
    <property type="component" value="Chromosome 1"/>
</dbReference>
<dbReference type="ExpressionAtlas" id="Q06548">
    <property type="expression patterns" value="baseline and differential"/>
</dbReference>
<dbReference type="GO" id="GO:0005886">
    <property type="term" value="C:plasma membrane"/>
    <property type="evidence" value="ECO:0007669"/>
    <property type="project" value="UniProtKB-SubCell"/>
</dbReference>
<dbReference type="GO" id="GO:0005524">
    <property type="term" value="F:ATP binding"/>
    <property type="evidence" value="ECO:0007669"/>
    <property type="project" value="UniProtKB-KW"/>
</dbReference>
<dbReference type="GO" id="GO:0106310">
    <property type="term" value="F:protein serine kinase activity"/>
    <property type="evidence" value="ECO:0007669"/>
    <property type="project" value="RHEA"/>
</dbReference>
<dbReference type="GO" id="GO:0004674">
    <property type="term" value="F:protein serine/threonine kinase activity"/>
    <property type="evidence" value="ECO:0007669"/>
    <property type="project" value="UniProtKB-KW"/>
</dbReference>
<dbReference type="GO" id="GO:0004713">
    <property type="term" value="F:protein tyrosine kinase activity"/>
    <property type="evidence" value="ECO:0007669"/>
    <property type="project" value="UniProtKB-KW"/>
</dbReference>
<dbReference type="GO" id="GO:0006952">
    <property type="term" value="P:defense response"/>
    <property type="evidence" value="ECO:0007669"/>
    <property type="project" value="UniProtKB-KW"/>
</dbReference>
<dbReference type="CDD" id="cd14066">
    <property type="entry name" value="STKc_IRAK"/>
    <property type="match status" value="1"/>
</dbReference>
<dbReference type="FunFam" id="1.10.510.10:FF:000258">
    <property type="entry name" value="Probable serine/threonine-protein kinase PBL8"/>
    <property type="match status" value="1"/>
</dbReference>
<dbReference type="FunFam" id="3.30.200.20:FF:000228">
    <property type="entry name" value="Serine/threonine-protein kinase BIK1"/>
    <property type="match status" value="1"/>
</dbReference>
<dbReference type="Gene3D" id="3.30.200.20">
    <property type="entry name" value="Phosphorylase Kinase, domain 1"/>
    <property type="match status" value="1"/>
</dbReference>
<dbReference type="Gene3D" id="1.10.510.10">
    <property type="entry name" value="Transferase(Phosphotransferase) domain 1"/>
    <property type="match status" value="1"/>
</dbReference>
<dbReference type="InterPro" id="IPR011009">
    <property type="entry name" value="Kinase-like_dom_sf"/>
</dbReference>
<dbReference type="InterPro" id="IPR050823">
    <property type="entry name" value="Plant_Ser_Thr_Prot_Kinase"/>
</dbReference>
<dbReference type="InterPro" id="IPR000719">
    <property type="entry name" value="Prot_kinase_dom"/>
</dbReference>
<dbReference type="InterPro" id="IPR017441">
    <property type="entry name" value="Protein_kinase_ATP_BS"/>
</dbReference>
<dbReference type="InterPro" id="IPR001245">
    <property type="entry name" value="Ser-Thr/Tyr_kinase_cat_dom"/>
</dbReference>
<dbReference type="InterPro" id="IPR008271">
    <property type="entry name" value="Ser/Thr_kinase_AS"/>
</dbReference>
<dbReference type="PANTHER" id="PTHR45621">
    <property type="entry name" value="OS01G0588500 PROTEIN-RELATED"/>
    <property type="match status" value="1"/>
</dbReference>
<dbReference type="Pfam" id="PF07714">
    <property type="entry name" value="PK_Tyr_Ser-Thr"/>
    <property type="match status" value="1"/>
</dbReference>
<dbReference type="SUPFAM" id="SSF56112">
    <property type="entry name" value="Protein kinase-like (PK-like)"/>
    <property type="match status" value="1"/>
</dbReference>
<dbReference type="PROSITE" id="PS00107">
    <property type="entry name" value="PROTEIN_KINASE_ATP"/>
    <property type="match status" value="1"/>
</dbReference>
<dbReference type="PROSITE" id="PS50011">
    <property type="entry name" value="PROTEIN_KINASE_DOM"/>
    <property type="match status" value="1"/>
</dbReference>
<dbReference type="PROSITE" id="PS00108">
    <property type="entry name" value="PROTEIN_KINASE_ST"/>
    <property type="match status" value="1"/>
</dbReference>
<accession>Q06548</accession>
<accession>Q9LNY0</accession>
<name>PBL9_ARATH</name>
<sequence>MGICLSAQVKAESSGASTKYDAKDIGSLGSKASSVSVRPSPRTEGEILQSPNLKSFSFAELKSATRNFRPDSVLGEGGFGCVFKGWIDEKSLTASRPGTGLVIAVKKLNQDGWQGHQEWLAEVNYLGQFSHRHLVKLIGYCLEDEHRLLVYEFMPRGSLENHLFRRGLYFQPLSWKLRLKVALGAAKGLAFLHSSETRVIYRDFKTSNILLDSEYNAKLSDFGLAKDGPIGDKSHVSTRVMGTHGYAAPEYLATGHLTTKSDVYSFGVVLLELLSGRRAVDKNRPSGERNLVEWAKPYLVNKRKIFRVIDNRLQDQYSMEEACKVATLSLRCLTTEIKLRPNMSEVVSHLEHIQSLNAAIGGNMDKTDRRMRRRSDSVVSKKVNAGFARQTAVGSTVVAYPRPSASPLYV</sequence>
<feature type="initiator methionine" description="Removed" evidence="11">
    <location>
        <position position="1"/>
    </location>
</feature>
<feature type="chain" id="PRO_0000024302" description="Probable serine/threonine-protein kinase PBL9">
    <location>
        <begin position="2"/>
        <end position="410"/>
    </location>
</feature>
<feature type="domain" description="Protein kinase" evidence="3">
    <location>
        <begin position="68"/>
        <end position="352"/>
    </location>
</feature>
<feature type="region of interest" description="Disordered" evidence="4">
    <location>
        <begin position="11"/>
        <end position="46"/>
    </location>
</feature>
<feature type="active site" description="Proton acceptor" evidence="3">
    <location>
        <position position="203"/>
    </location>
</feature>
<feature type="binding site" evidence="3">
    <location>
        <begin position="74"/>
        <end position="82"/>
    </location>
    <ligand>
        <name>ATP</name>
        <dbReference type="ChEBI" id="CHEBI:30616"/>
    </ligand>
</feature>
<feature type="binding site" evidence="3">
    <location>
        <position position="106"/>
    </location>
    <ligand>
        <name>ATP</name>
        <dbReference type="ChEBI" id="CHEBI:30616"/>
    </ligand>
</feature>
<feature type="modified residue" description="Phosphotyrosine" evidence="1">
    <location>
        <position position="151"/>
    </location>
</feature>
<feature type="modified residue" description="Phosphoserine" evidence="1">
    <location>
        <position position="207"/>
    </location>
</feature>
<feature type="modified residue" description="Phosphoserine" evidence="1">
    <location>
        <position position="237"/>
    </location>
</feature>
<feature type="modified residue" description="Phosphothreonine" evidence="1">
    <location>
        <position position="238"/>
    </location>
</feature>
<feature type="modified residue" description="Phosphothreonine" evidence="1">
    <location>
        <position position="243"/>
    </location>
</feature>
<feature type="modified residue" description="Phosphotyrosine" evidence="1">
    <location>
        <position position="251"/>
    </location>
</feature>
<feature type="lipid moiety-binding region" description="N-myristoyl glycine" evidence="2">
    <location>
        <position position="2"/>
    </location>
</feature>
<feature type="lipid moiety-binding region" description="S-palmitoyl cysteine" evidence="2">
    <location>
        <position position="4"/>
    </location>
</feature>
<organism>
    <name type="scientific">Arabidopsis thaliana</name>
    <name type="common">Mouse-ear cress</name>
    <dbReference type="NCBI Taxonomy" id="3702"/>
    <lineage>
        <taxon>Eukaryota</taxon>
        <taxon>Viridiplantae</taxon>
        <taxon>Streptophyta</taxon>
        <taxon>Embryophyta</taxon>
        <taxon>Tracheophyta</taxon>
        <taxon>Spermatophyta</taxon>
        <taxon>Magnoliopsida</taxon>
        <taxon>eudicotyledons</taxon>
        <taxon>Gunneridae</taxon>
        <taxon>Pentapetalae</taxon>
        <taxon>rosids</taxon>
        <taxon>malvids</taxon>
        <taxon>Brassicales</taxon>
        <taxon>Brassicaceae</taxon>
        <taxon>Camelineae</taxon>
        <taxon>Arabidopsis</taxon>
    </lineage>
</organism>
<comment type="function">
    <text evidence="1 5">Possible bi-functional kinase. In vitro, it exhibits serine/threonine activity. In vivo, can phosphorylate tyrosine residues of limited substrates (PubMed:1450380). May be involved in plant defense signaling (By similarity).</text>
</comment>
<comment type="catalytic activity">
    <reaction evidence="11">
        <text>L-seryl-[protein] + ATP = O-phospho-L-seryl-[protein] + ADP + H(+)</text>
        <dbReference type="Rhea" id="RHEA:17989"/>
        <dbReference type="Rhea" id="RHEA-COMP:9863"/>
        <dbReference type="Rhea" id="RHEA-COMP:11604"/>
        <dbReference type="ChEBI" id="CHEBI:15378"/>
        <dbReference type="ChEBI" id="CHEBI:29999"/>
        <dbReference type="ChEBI" id="CHEBI:30616"/>
        <dbReference type="ChEBI" id="CHEBI:83421"/>
        <dbReference type="ChEBI" id="CHEBI:456216"/>
        <dbReference type="EC" id="2.7.11.1"/>
    </reaction>
</comment>
<comment type="catalytic activity">
    <reaction evidence="11">
        <text>L-threonyl-[protein] + ATP = O-phospho-L-threonyl-[protein] + ADP + H(+)</text>
        <dbReference type="Rhea" id="RHEA:46608"/>
        <dbReference type="Rhea" id="RHEA-COMP:11060"/>
        <dbReference type="Rhea" id="RHEA-COMP:11605"/>
        <dbReference type="ChEBI" id="CHEBI:15378"/>
        <dbReference type="ChEBI" id="CHEBI:30013"/>
        <dbReference type="ChEBI" id="CHEBI:30616"/>
        <dbReference type="ChEBI" id="CHEBI:61977"/>
        <dbReference type="ChEBI" id="CHEBI:456216"/>
        <dbReference type="EC" id="2.7.11.1"/>
    </reaction>
</comment>
<comment type="subunit">
    <text evidence="6">Interacts with the Xanthomonas campestris effector XopAC/AvrAC.</text>
</comment>
<comment type="subcellular location">
    <subcellularLocation>
        <location evidence="1">Cell membrane</location>
        <topology evidence="1">Lipid-anchor</topology>
    </subcellularLocation>
</comment>
<comment type="alternative products">
    <event type="alternative splicing"/>
    <isoform>
        <id>Q06548-1</id>
        <name>1</name>
        <sequence type="displayed"/>
    </isoform>
    <text>A number of isoforms are produced. According to EST sequences.</text>
</comment>
<comment type="tissue specificity">
    <text evidence="7">Expressed in stomatal guard cells of leaves.</text>
</comment>
<comment type="similarity">
    <text evidence="3">Belongs to the protein kinase superfamily. Ser/Thr protein kinase family.</text>
</comment>
<comment type="sequence caution" evidence="11">
    <conflict type="erroneous gene model prediction">
        <sequence resource="EMBL-CDS" id="AAF79545"/>
    </conflict>
</comment>
<keyword id="KW-0025">Alternative splicing</keyword>
<keyword id="KW-0067">ATP-binding</keyword>
<keyword id="KW-1003">Cell membrane</keyword>
<keyword id="KW-0418">Kinase</keyword>
<keyword id="KW-0449">Lipoprotein</keyword>
<keyword id="KW-0472">Membrane</keyword>
<keyword id="KW-0519">Myristate</keyword>
<keyword id="KW-0547">Nucleotide-binding</keyword>
<keyword id="KW-0564">Palmitate</keyword>
<keyword id="KW-0597">Phosphoprotein</keyword>
<keyword id="KW-0611">Plant defense</keyword>
<keyword id="KW-1185">Reference proteome</keyword>
<keyword id="KW-0723">Serine/threonine-protein kinase</keyword>
<keyword id="KW-0808">Transferase</keyword>
<keyword id="KW-0829">Tyrosine-protein kinase</keyword>
<gene>
    <name evidence="9" type="primary">PBL9</name>
    <name evidence="8" type="synonym">APK1</name>
    <name evidence="8" type="synonym">APK1A</name>
    <name evidence="10" type="synonym">PIX15</name>
    <name type="ordered locus">At1g07570</name>
    <name type="ORF">F22G5.5</name>
</gene>
<protein>
    <recommendedName>
        <fullName evidence="11">Probable serine/threonine-protein kinase PBL9</fullName>
        <ecNumber evidence="11">2.7.11.1</ecNumber>
    </recommendedName>
    <alternativeName>
        <fullName evidence="9">PBS1-like protein 9</fullName>
    </alternativeName>
    <alternativeName>
        <fullName evidence="11">Protein kinase 1A</fullName>
    </alternativeName>
</protein>
<proteinExistence type="evidence at protein level"/>